<keyword id="KW-0067">ATP-binding</keyword>
<keyword id="KW-0963">Cytoplasm</keyword>
<keyword id="KW-0418">Kinase</keyword>
<keyword id="KW-0460">Magnesium</keyword>
<keyword id="KW-0479">Metal-binding</keyword>
<keyword id="KW-0546">Nucleotide metabolism</keyword>
<keyword id="KW-0547">Nucleotide-binding</keyword>
<keyword id="KW-0597">Phosphoprotein</keyword>
<keyword id="KW-1185">Reference proteome</keyword>
<keyword id="KW-0808">Transferase</keyword>
<protein>
    <recommendedName>
        <fullName evidence="1">Nucleoside diphosphate kinase</fullName>
        <shortName evidence="1">NDK</shortName>
        <shortName evidence="1">NDP kinase</shortName>
        <ecNumber evidence="1">2.7.4.6</ecNumber>
    </recommendedName>
    <alternativeName>
        <fullName evidence="1">Nucleoside-2-P kinase</fullName>
    </alternativeName>
</protein>
<comment type="function">
    <text evidence="1">Major role in the synthesis of nucleoside triphosphates other than ATP. The ATP gamma phosphate is transferred to the NDP beta phosphate via a ping-pong mechanism, using a phosphorylated active-site intermediate.</text>
</comment>
<comment type="catalytic activity">
    <reaction evidence="1">
        <text>a 2'-deoxyribonucleoside 5'-diphosphate + ATP = a 2'-deoxyribonucleoside 5'-triphosphate + ADP</text>
        <dbReference type="Rhea" id="RHEA:44640"/>
        <dbReference type="ChEBI" id="CHEBI:30616"/>
        <dbReference type="ChEBI" id="CHEBI:61560"/>
        <dbReference type="ChEBI" id="CHEBI:73316"/>
        <dbReference type="ChEBI" id="CHEBI:456216"/>
        <dbReference type="EC" id="2.7.4.6"/>
    </reaction>
</comment>
<comment type="catalytic activity">
    <reaction evidence="1">
        <text>a ribonucleoside 5'-diphosphate + ATP = a ribonucleoside 5'-triphosphate + ADP</text>
        <dbReference type="Rhea" id="RHEA:18113"/>
        <dbReference type="ChEBI" id="CHEBI:30616"/>
        <dbReference type="ChEBI" id="CHEBI:57930"/>
        <dbReference type="ChEBI" id="CHEBI:61557"/>
        <dbReference type="ChEBI" id="CHEBI:456216"/>
        <dbReference type="EC" id="2.7.4.6"/>
    </reaction>
</comment>
<comment type="cofactor">
    <cofactor evidence="1">
        <name>Mg(2+)</name>
        <dbReference type="ChEBI" id="CHEBI:18420"/>
    </cofactor>
</comment>
<comment type="subunit">
    <text evidence="1">Homotetramer.</text>
</comment>
<comment type="subcellular location">
    <subcellularLocation>
        <location evidence="1">Cytoplasm</location>
    </subcellularLocation>
</comment>
<comment type="similarity">
    <text evidence="1">Belongs to the NDK family.</text>
</comment>
<dbReference type="EC" id="2.7.4.6" evidence="1"/>
<dbReference type="EMBL" id="CP000158">
    <property type="protein sequence ID" value="ABI77015.1"/>
    <property type="molecule type" value="Genomic_DNA"/>
</dbReference>
<dbReference type="RefSeq" id="WP_011647262.1">
    <property type="nucleotide sequence ID" value="NC_008358.1"/>
</dbReference>
<dbReference type="SMR" id="Q0BZX9"/>
<dbReference type="STRING" id="228405.HNE_2269"/>
<dbReference type="KEGG" id="hne:HNE_2269"/>
<dbReference type="eggNOG" id="COG0105">
    <property type="taxonomic scope" value="Bacteria"/>
</dbReference>
<dbReference type="HOGENOM" id="CLU_060216_8_1_5"/>
<dbReference type="Proteomes" id="UP000001959">
    <property type="component" value="Chromosome"/>
</dbReference>
<dbReference type="GO" id="GO:0005737">
    <property type="term" value="C:cytoplasm"/>
    <property type="evidence" value="ECO:0007669"/>
    <property type="project" value="UniProtKB-SubCell"/>
</dbReference>
<dbReference type="GO" id="GO:0005524">
    <property type="term" value="F:ATP binding"/>
    <property type="evidence" value="ECO:0007669"/>
    <property type="project" value="UniProtKB-UniRule"/>
</dbReference>
<dbReference type="GO" id="GO:0046872">
    <property type="term" value="F:metal ion binding"/>
    <property type="evidence" value="ECO:0007669"/>
    <property type="project" value="UniProtKB-KW"/>
</dbReference>
<dbReference type="GO" id="GO:0004550">
    <property type="term" value="F:nucleoside diphosphate kinase activity"/>
    <property type="evidence" value="ECO:0007669"/>
    <property type="project" value="UniProtKB-UniRule"/>
</dbReference>
<dbReference type="GO" id="GO:0006241">
    <property type="term" value="P:CTP biosynthetic process"/>
    <property type="evidence" value="ECO:0007669"/>
    <property type="project" value="UniProtKB-UniRule"/>
</dbReference>
<dbReference type="GO" id="GO:0006183">
    <property type="term" value="P:GTP biosynthetic process"/>
    <property type="evidence" value="ECO:0007669"/>
    <property type="project" value="UniProtKB-UniRule"/>
</dbReference>
<dbReference type="GO" id="GO:0006228">
    <property type="term" value="P:UTP biosynthetic process"/>
    <property type="evidence" value="ECO:0007669"/>
    <property type="project" value="UniProtKB-UniRule"/>
</dbReference>
<dbReference type="CDD" id="cd04413">
    <property type="entry name" value="NDPk_I"/>
    <property type="match status" value="1"/>
</dbReference>
<dbReference type="FunFam" id="3.30.70.141:FF:000017">
    <property type="entry name" value="Nucleoside diphosphate kinase"/>
    <property type="match status" value="1"/>
</dbReference>
<dbReference type="Gene3D" id="3.30.70.141">
    <property type="entry name" value="Nucleoside diphosphate kinase-like domain"/>
    <property type="match status" value="1"/>
</dbReference>
<dbReference type="HAMAP" id="MF_00451">
    <property type="entry name" value="NDP_kinase"/>
    <property type="match status" value="1"/>
</dbReference>
<dbReference type="InterPro" id="IPR034907">
    <property type="entry name" value="NDK-like_dom"/>
</dbReference>
<dbReference type="InterPro" id="IPR036850">
    <property type="entry name" value="NDK-like_dom_sf"/>
</dbReference>
<dbReference type="InterPro" id="IPR001564">
    <property type="entry name" value="Nucleoside_diP_kinase"/>
</dbReference>
<dbReference type="NCBIfam" id="NF001908">
    <property type="entry name" value="PRK00668.1"/>
    <property type="match status" value="1"/>
</dbReference>
<dbReference type="PANTHER" id="PTHR46161">
    <property type="entry name" value="NUCLEOSIDE DIPHOSPHATE KINASE"/>
    <property type="match status" value="1"/>
</dbReference>
<dbReference type="PANTHER" id="PTHR46161:SF3">
    <property type="entry name" value="NUCLEOSIDE DIPHOSPHATE KINASE DDB_G0292928-RELATED"/>
    <property type="match status" value="1"/>
</dbReference>
<dbReference type="Pfam" id="PF00334">
    <property type="entry name" value="NDK"/>
    <property type="match status" value="1"/>
</dbReference>
<dbReference type="PRINTS" id="PR01243">
    <property type="entry name" value="NUCDPKINASE"/>
</dbReference>
<dbReference type="SMART" id="SM00562">
    <property type="entry name" value="NDK"/>
    <property type="match status" value="1"/>
</dbReference>
<dbReference type="SUPFAM" id="SSF54919">
    <property type="entry name" value="Nucleoside diphosphate kinase, NDK"/>
    <property type="match status" value="1"/>
</dbReference>
<dbReference type="PROSITE" id="PS51374">
    <property type="entry name" value="NDPK_LIKE"/>
    <property type="match status" value="1"/>
</dbReference>
<proteinExistence type="inferred from homology"/>
<feature type="chain" id="PRO_0000267784" description="Nucleoside diphosphate kinase">
    <location>
        <begin position="1"/>
        <end position="140"/>
    </location>
</feature>
<feature type="active site" description="Pros-phosphohistidine intermediate" evidence="1">
    <location>
        <position position="117"/>
    </location>
</feature>
<feature type="binding site" evidence="1">
    <location>
        <position position="11"/>
    </location>
    <ligand>
        <name>ATP</name>
        <dbReference type="ChEBI" id="CHEBI:30616"/>
    </ligand>
</feature>
<feature type="binding site" evidence="1">
    <location>
        <position position="59"/>
    </location>
    <ligand>
        <name>ATP</name>
        <dbReference type="ChEBI" id="CHEBI:30616"/>
    </ligand>
</feature>
<feature type="binding site" evidence="1">
    <location>
        <position position="87"/>
    </location>
    <ligand>
        <name>ATP</name>
        <dbReference type="ChEBI" id="CHEBI:30616"/>
    </ligand>
</feature>
<feature type="binding site" evidence="1">
    <location>
        <position position="93"/>
    </location>
    <ligand>
        <name>ATP</name>
        <dbReference type="ChEBI" id="CHEBI:30616"/>
    </ligand>
</feature>
<feature type="binding site" evidence="1">
    <location>
        <position position="104"/>
    </location>
    <ligand>
        <name>ATP</name>
        <dbReference type="ChEBI" id="CHEBI:30616"/>
    </ligand>
</feature>
<feature type="binding site" evidence="1">
    <location>
        <position position="114"/>
    </location>
    <ligand>
        <name>ATP</name>
        <dbReference type="ChEBI" id="CHEBI:30616"/>
    </ligand>
</feature>
<reference key="1">
    <citation type="journal article" date="2006" name="J. Bacteriol.">
        <title>Comparative genomic evidence for a close relationship between the dimorphic prosthecate bacteria Hyphomonas neptunium and Caulobacter crescentus.</title>
        <authorList>
            <person name="Badger J.H."/>
            <person name="Hoover T.R."/>
            <person name="Brun Y.V."/>
            <person name="Weiner R.M."/>
            <person name="Laub M.T."/>
            <person name="Alexandre G."/>
            <person name="Mrazek J."/>
            <person name="Ren Q."/>
            <person name="Paulsen I.T."/>
            <person name="Nelson K.E."/>
            <person name="Khouri H.M."/>
            <person name="Radune D."/>
            <person name="Sosa J."/>
            <person name="Dodson R.J."/>
            <person name="Sullivan S.A."/>
            <person name="Rosovitz M.J."/>
            <person name="Madupu R."/>
            <person name="Brinkac L.M."/>
            <person name="Durkin A.S."/>
            <person name="Daugherty S.C."/>
            <person name="Kothari S.P."/>
            <person name="Giglio M.G."/>
            <person name="Zhou L."/>
            <person name="Haft D.H."/>
            <person name="Selengut J.D."/>
            <person name="Davidsen T.M."/>
            <person name="Yang Q."/>
            <person name="Zafar N."/>
            <person name="Ward N.L."/>
        </authorList>
    </citation>
    <scope>NUCLEOTIDE SEQUENCE [LARGE SCALE GENOMIC DNA]</scope>
    <source>
        <strain>ATCC 15444</strain>
    </source>
</reference>
<organism>
    <name type="scientific">Hyphomonas neptunium (strain ATCC 15444)</name>
    <dbReference type="NCBI Taxonomy" id="228405"/>
    <lineage>
        <taxon>Bacteria</taxon>
        <taxon>Pseudomonadati</taxon>
        <taxon>Pseudomonadota</taxon>
        <taxon>Alphaproteobacteria</taxon>
        <taxon>Hyphomonadales</taxon>
        <taxon>Hyphomonadaceae</taxon>
        <taxon>Hyphomonas</taxon>
    </lineage>
</organism>
<sequence length="140" mass="15246">MAVQRTFSIIKPDATERNLTGAINAVIEKAGLRIVGQRRIQMTRAQAERFYSVHSARPFFGELVDFMISGPVVVQVLEAEDAITKYREVMGATNPADAADGTIRKLFAKSIGENSVHGSDSAENAALEIAQFFSEADLTN</sequence>
<accession>Q0BZX9</accession>
<name>NDK_HYPNA</name>
<evidence type="ECO:0000255" key="1">
    <source>
        <dbReference type="HAMAP-Rule" id="MF_00451"/>
    </source>
</evidence>
<gene>
    <name evidence="1" type="primary">ndk</name>
    <name type="ordered locus">HNE_2269</name>
</gene>